<reference key="1">
    <citation type="journal article" date="1994" name="Yeast">
        <title>Sequence comparison of the ARG4 chromosomal regions from the two related yeasts, Saccharomyces cerevisiae and Saccharomyces douglasii.</title>
        <authorList>
            <person name="Adjiri A."/>
            <person name="Chanet R."/>
            <person name="Mezard C."/>
            <person name="Fabre F."/>
        </authorList>
    </citation>
    <scope>NUCLEOTIDE SEQUENCE [GENOMIC DNA]</scope>
</reference>
<evidence type="ECO:0000250" key="1">
    <source>
        <dbReference type="UniProtKB" id="P24058"/>
    </source>
</evidence>
<evidence type="ECO:0000305" key="2"/>
<gene>
    <name type="primary">ARG4</name>
</gene>
<accession>P41906</accession>
<organism>
    <name type="scientific">Saccharomyces paradoxus</name>
    <name type="common">Yeast</name>
    <name type="synonym">Saccharomyces douglasii</name>
    <dbReference type="NCBI Taxonomy" id="27291"/>
    <lineage>
        <taxon>Eukaryota</taxon>
        <taxon>Fungi</taxon>
        <taxon>Dikarya</taxon>
        <taxon>Ascomycota</taxon>
        <taxon>Saccharomycotina</taxon>
        <taxon>Saccharomycetes</taxon>
        <taxon>Saccharomycetales</taxon>
        <taxon>Saccharomycetaceae</taxon>
        <taxon>Saccharomyces</taxon>
    </lineage>
</organism>
<keyword id="KW-0028">Amino-acid biosynthesis</keyword>
<keyword id="KW-0055">Arginine biosynthesis</keyword>
<keyword id="KW-0456">Lyase</keyword>
<comment type="catalytic activity">
    <reaction>
        <text>2-(N(omega)-L-arginino)succinate = fumarate + L-arginine</text>
        <dbReference type="Rhea" id="RHEA:24020"/>
        <dbReference type="ChEBI" id="CHEBI:29806"/>
        <dbReference type="ChEBI" id="CHEBI:32682"/>
        <dbReference type="ChEBI" id="CHEBI:57472"/>
        <dbReference type="EC" id="4.3.2.1"/>
    </reaction>
</comment>
<comment type="pathway">
    <text>Amino-acid biosynthesis; L-arginine biosynthesis; L-arginine from L-ornithine and carbamoyl phosphate: step 3/3.</text>
</comment>
<comment type="subunit">
    <text>Homotetramer.</text>
</comment>
<comment type="similarity">
    <text evidence="2">Belongs to the lyase 1 family. Argininosuccinate lyase subfamily.</text>
</comment>
<feature type="chain" id="PRO_0000137728" description="Argininosuccinate lyase">
    <location>
        <begin position="1"/>
        <end position="463"/>
    </location>
</feature>
<feature type="active site" description="Proton acceptor" evidence="1">
    <location>
        <position position="162"/>
    </location>
</feature>
<feature type="active site" description="Proton donor" evidence="1">
    <location>
        <position position="283"/>
    </location>
</feature>
<feature type="binding site" description="in chain A" evidence="1">
    <location>
        <position position="27"/>
    </location>
    <ligand>
        <name>2-(N(omega)-L-arginino)succinate</name>
        <dbReference type="ChEBI" id="CHEBI:57472"/>
        <note>ligand shared between tetrameric partners</note>
    </ligand>
</feature>
<feature type="binding site" description="in chain A" evidence="1">
    <location>
        <position position="115"/>
    </location>
    <ligand>
        <name>2-(N(omega)-L-arginino)succinate</name>
        <dbReference type="ChEBI" id="CHEBI:57472"/>
        <note>ligand shared between tetrameric partners</note>
    </ligand>
</feature>
<feature type="binding site" description="in chain C" evidence="1">
    <location>
        <position position="161"/>
    </location>
    <ligand>
        <name>2-(N(omega)-L-arginino)succinate</name>
        <dbReference type="ChEBI" id="CHEBI:57472"/>
        <note>ligand shared between tetrameric partners</note>
    </ligand>
</feature>
<feature type="binding site" description="in chain B" evidence="1">
    <location>
        <position position="291"/>
    </location>
    <ligand>
        <name>2-(N(omega)-L-arginino)succinate</name>
        <dbReference type="ChEBI" id="CHEBI:57472"/>
        <note>ligand shared between tetrameric partners</note>
    </ligand>
</feature>
<feature type="binding site" description="in chain A" evidence="1">
    <location>
        <position position="323"/>
    </location>
    <ligand>
        <name>2-(N(omega)-L-arginino)succinate</name>
        <dbReference type="ChEBI" id="CHEBI:57472"/>
        <note>ligand shared between tetrameric partners</note>
    </ligand>
</feature>
<feature type="binding site" description="in chain A" evidence="1">
    <location>
        <position position="328"/>
    </location>
    <ligand>
        <name>2-(N(omega)-L-arginino)succinate</name>
        <dbReference type="ChEBI" id="CHEBI:57472"/>
        <note>ligand shared between tetrameric partners</note>
    </ligand>
</feature>
<feature type="binding site" description="in chain A" evidence="1">
    <location>
        <position position="331"/>
    </location>
    <ligand>
        <name>2-(N(omega)-L-arginino)succinate</name>
        <dbReference type="ChEBI" id="CHEBI:57472"/>
        <note>ligand shared between tetrameric partners</note>
    </ligand>
</feature>
<feature type="site" description="Increases basicity of active site His" evidence="1">
    <location>
        <position position="296"/>
    </location>
</feature>
<proteinExistence type="inferred from homology"/>
<sequence>MSDGTQKLWGGRFTGETDPLMHLYNASLPYDYKMYKADLEGTKVYTAGLQKLGLLTDAELAKIHEGLAEIQKEWDADKFVRHPNDEDIHTANERRLGEIIGREIAGKVHTGRSRNDQVVTDLRIYCRDVVNDTLFPALKGLVDVLIKRAEGEIDILMPGYTHLQRAQPIRWSHWLSSYATYFTEDYKRLGQILHRLNQSPLGAGALAGHPYGIDREFLAEGLGFNSVIGNSLVAVSDRDFIVELMFWGTLFMNHISRFAEDLIIYCTAEFGFIQLSDAYSTGSSLMPQKKNADSLELLRGKSGRVFGDLTGFLMSLKGIPSTYDKDMQEDKEPLFDCLTTVEHSMLIATGVISTLTVNKDKMEAALTMDMLATDLADYLVRKGVPFRETHHISGECVATAENLGLSGIDKLTLEQYQKIDSRFAEDLFETFNFEQSVERRNATGGTAKSAVLKQLNNLKSQLN</sequence>
<protein>
    <recommendedName>
        <fullName>Argininosuccinate lyase</fullName>
        <shortName>ASAL</shortName>
        <ecNumber>4.3.2.1</ecNumber>
    </recommendedName>
    <alternativeName>
        <fullName>Arginosuccinase</fullName>
    </alternativeName>
</protein>
<dbReference type="EC" id="4.3.2.1"/>
<dbReference type="EMBL" id="X73886">
    <property type="protein sequence ID" value="CAA52091.1"/>
    <property type="molecule type" value="Genomic_DNA"/>
</dbReference>
<dbReference type="SMR" id="P41906"/>
<dbReference type="VEuPathDB" id="FungiDB:SPAR_H00600"/>
<dbReference type="OrthoDB" id="2561043at2759"/>
<dbReference type="UniPathway" id="UPA00068">
    <property type="reaction ID" value="UER00114"/>
</dbReference>
<dbReference type="GO" id="GO:0005829">
    <property type="term" value="C:cytosol"/>
    <property type="evidence" value="ECO:0007669"/>
    <property type="project" value="TreeGrafter"/>
</dbReference>
<dbReference type="GO" id="GO:0004056">
    <property type="term" value="F:argininosuccinate lyase activity"/>
    <property type="evidence" value="ECO:0007669"/>
    <property type="project" value="UniProtKB-EC"/>
</dbReference>
<dbReference type="GO" id="GO:0042450">
    <property type="term" value="P:arginine biosynthetic process via ornithine"/>
    <property type="evidence" value="ECO:0007669"/>
    <property type="project" value="InterPro"/>
</dbReference>
<dbReference type="GO" id="GO:0006526">
    <property type="term" value="P:L-arginine biosynthetic process"/>
    <property type="evidence" value="ECO:0007669"/>
    <property type="project" value="UniProtKB-UniPathway"/>
</dbReference>
<dbReference type="CDD" id="cd01359">
    <property type="entry name" value="Argininosuccinate_lyase"/>
    <property type="match status" value="1"/>
</dbReference>
<dbReference type="FunFam" id="1.10.275.10:FF:000002">
    <property type="entry name" value="Argininosuccinate lyase"/>
    <property type="match status" value="1"/>
</dbReference>
<dbReference type="FunFam" id="1.10.40.30:FF:000001">
    <property type="entry name" value="Argininosuccinate lyase"/>
    <property type="match status" value="1"/>
</dbReference>
<dbReference type="FunFam" id="1.20.200.10:FF:000002">
    <property type="entry name" value="Argininosuccinate lyase"/>
    <property type="match status" value="1"/>
</dbReference>
<dbReference type="Gene3D" id="1.10.40.30">
    <property type="entry name" value="Fumarase/aspartase (C-terminal domain)"/>
    <property type="match status" value="1"/>
</dbReference>
<dbReference type="Gene3D" id="1.20.200.10">
    <property type="entry name" value="Fumarase/aspartase (Central domain)"/>
    <property type="match status" value="1"/>
</dbReference>
<dbReference type="Gene3D" id="1.10.275.10">
    <property type="entry name" value="Fumarase/aspartase (N-terminal domain)"/>
    <property type="match status" value="1"/>
</dbReference>
<dbReference type="HAMAP" id="MF_00006">
    <property type="entry name" value="Arg_succ_lyase"/>
    <property type="match status" value="1"/>
</dbReference>
<dbReference type="InterPro" id="IPR029419">
    <property type="entry name" value="Arg_succ_lyase_C"/>
</dbReference>
<dbReference type="InterPro" id="IPR009049">
    <property type="entry name" value="Argininosuccinate_lyase"/>
</dbReference>
<dbReference type="InterPro" id="IPR024083">
    <property type="entry name" value="Fumarase/histidase_N"/>
</dbReference>
<dbReference type="InterPro" id="IPR020557">
    <property type="entry name" value="Fumarate_lyase_CS"/>
</dbReference>
<dbReference type="InterPro" id="IPR000362">
    <property type="entry name" value="Fumarate_lyase_fam"/>
</dbReference>
<dbReference type="InterPro" id="IPR022761">
    <property type="entry name" value="Fumarate_lyase_N"/>
</dbReference>
<dbReference type="InterPro" id="IPR008948">
    <property type="entry name" value="L-Aspartase-like"/>
</dbReference>
<dbReference type="NCBIfam" id="TIGR00838">
    <property type="entry name" value="argH"/>
    <property type="match status" value="1"/>
</dbReference>
<dbReference type="PANTHER" id="PTHR43814">
    <property type="entry name" value="ARGININOSUCCINATE LYASE"/>
    <property type="match status" value="1"/>
</dbReference>
<dbReference type="PANTHER" id="PTHR43814:SF1">
    <property type="entry name" value="ARGININOSUCCINATE LYASE"/>
    <property type="match status" value="1"/>
</dbReference>
<dbReference type="Pfam" id="PF14698">
    <property type="entry name" value="ASL_C2"/>
    <property type="match status" value="1"/>
</dbReference>
<dbReference type="Pfam" id="PF00206">
    <property type="entry name" value="Lyase_1"/>
    <property type="match status" value="1"/>
</dbReference>
<dbReference type="PRINTS" id="PR00145">
    <property type="entry name" value="ARGSUCLYASE"/>
</dbReference>
<dbReference type="PRINTS" id="PR00149">
    <property type="entry name" value="FUMRATELYASE"/>
</dbReference>
<dbReference type="SUPFAM" id="SSF48557">
    <property type="entry name" value="L-aspartase-like"/>
    <property type="match status" value="1"/>
</dbReference>
<dbReference type="PROSITE" id="PS00163">
    <property type="entry name" value="FUMARATE_LYASES"/>
    <property type="match status" value="1"/>
</dbReference>
<name>ARLY_SACPA</name>